<organism>
    <name type="scientific">Arabidopsis thaliana</name>
    <name type="common">Mouse-ear cress</name>
    <dbReference type="NCBI Taxonomy" id="3702"/>
    <lineage>
        <taxon>Eukaryota</taxon>
        <taxon>Viridiplantae</taxon>
        <taxon>Streptophyta</taxon>
        <taxon>Embryophyta</taxon>
        <taxon>Tracheophyta</taxon>
        <taxon>Spermatophyta</taxon>
        <taxon>Magnoliopsida</taxon>
        <taxon>eudicotyledons</taxon>
        <taxon>Gunneridae</taxon>
        <taxon>Pentapetalae</taxon>
        <taxon>rosids</taxon>
        <taxon>malvids</taxon>
        <taxon>Brassicales</taxon>
        <taxon>Brassicaceae</taxon>
        <taxon>Camelineae</taxon>
        <taxon>Arabidopsis</taxon>
    </lineage>
</organism>
<dbReference type="EMBL" id="AL138657">
    <property type="protein sequence ID" value="CAB75494.1"/>
    <property type="molecule type" value="Genomic_DNA"/>
</dbReference>
<dbReference type="EMBL" id="CP002686">
    <property type="protein sequence ID" value="AEE78055.1"/>
    <property type="molecule type" value="Genomic_DNA"/>
</dbReference>
<dbReference type="EMBL" id="AK319168">
    <property type="protein sequence ID" value="BAH57283.1"/>
    <property type="status" value="ALT_FRAME"/>
    <property type="molecule type" value="mRNA"/>
</dbReference>
<dbReference type="PIR" id="T47505">
    <property type="entry name" value="T47505"/>
</dbReference>
<dbReference type="RefSeq" id="NP_190151.1">
    <molecule id="Q9M1E2-1"/>
    <property type="nucleotide sequence ID" value="NM_114434.2"/>
</dbReference>
<dbReference type="SMR" id="Q9M1E2"/>
<dbReference type="FunCoup" id="Q9M1E2">
    <property type="interactions" value="35"/>
</dbReference>
<dbReference type="STRING" id="3702.Q9M1E2"/>
<dbReference type="TCDB" id="2.A.17.3.5">
    <property type="family name" value="the proton-dependent oligopeptide transporter (pot/ptr) family"/>
</dbReference>
<dbReference type="PaxDb" id="3702-AT3G45650.1"/>
<dbReference type="EnsemblPlants" id="AT3G45650.1">
    <molecule id="Q9M1E2-1"/>
    <property type="protein sequence ID" value="AT3G45650.1"/>
    <property type="gene ID" value="AT3G45650"/>
</dbReference>
<dbReference type="GeneID" id="823707"/>
<dbReference type="Gramene" id="AT3G45650.1">
    <molecule id="Q9M1E2-1"/>
    <property type="protein sequence ID" value="AT3G45650.1"/>
    <property type="gene ID" value="AT3G45650"/>
</dbReference>
<dbReference type="KEGG" id="ath:AT3G45650"/>
<dbReference type="Araport" id="AT3G45650"/>
<dbReference type="TAIR" id="AT3G45650">
    <property type="gene designation" value="NPF2.7"/>
</dbReference>
<dbReference type="eggNOG" id="KOG1237">
    <property type="taxonomic scope" value="Eukaryota"/>
</dbReference>
<dbReference type="HOGENOM" id="CLU_009313_4_2_1"/>
<dbReference type="InParanoid" id="Q9M1E2"/>
<dbReference type="OMA" id="LAMNRHI"/>
<dbReference type="OrthoDB" id="8904098at2759"/>
<dbReference type="PhylomeDB" id="Q9M1E2"/>
<dbReference type="BRENDA" id="7.3.2.4">
    <property type="organism ID" value="399"/>
</dbReference>
<dbReference type="PRO" id="PR:Q9M1E2"/>
<dbReference type="Proteomes" id="UP000006548">
    <property type="component" value="Chromosome 3"/>
</dbReference>
<dbReference type="ExpressionAtlas" id="Q9M1E2">
    <property type="expression patterns" value="baseline and differential"/>
</dbReference>
<dbReference type="GO" id="GO:0005886">
    <property type="term" value="C:plasma membrane"/>
    <property type="evidence" value="ECO:0000314"/>
    <property type="project" value="TAIR"/>
</dbReference>
<dbReference type="GO" id="GO:0010542">
    <property type="term" value="F:nitrate efflux transmembrane transporter activity"/>
    <property type="evidence" value="ECO:0000315"/>
    <property type="project" value="TAIR"/>
</dbReference>
<dbReference type="GO" id="GO:0042128">
    <property type="term" value="P:nitrate assimilation"/>
    <property type="evidence" value="ECO:0007669"/>
    <property type="project" value="UniProtKB-KW"/>
</dbReference>
<dbReference type="GO" id="GO:0015706">
    <property type="term" value="P:nitrate transmembrane transport"/>
    <property type="evidence" value="ECO:0000315"/>
    <property type="project" value="TAIR"/>
</dbReference>
<dbReference type="GO" id="GO:0010447">
    <property type="term" value="P:response to acidic pH"/>
    <property type="evidence" value="ECO:0000315"/>
    <property type="project" value="TAIR"/>
</dbReference>
<dbReference type="CDD" id="cd17416">
    <property type="entry name" value="MFS_NPF1_2"/>
    <property type="match status" value="1"/>
</dbReference>
<dbReference type="Gene3D" id="1.20.1250.20">
    <property type="entry name" value="MFS general substrate transporter like domains"/>
    <property type="match status" value="1"/>
</dbReference>
<dbReference type="InterPro" id="IPR036259">
    <property type="entry name" value="MFS_trans_sf"/>
</dbReference>
<dbReference type="InterPro" id="IPR000109">
    <property type="entry name" value="POT_fam"/>
</dbReference>
<dbReference type="PANTHER" id="PTHR11654">
    <property type="entry name" value="OLIGOPEPTIDE TRANSPORTER-RELATED"/>
    <property type="match status" value="1"/>
</dbReference>
<dbReference type="Pfam" id="PF00854">
    <property type="entry name" value="PTR2"/>
    <property type="match status" value="1"/>
</dbReference>
<dbReference type="SUPFAM" id="SSF103473">
    <property type="entry name" value="MFS general substrate transporter"/>
    <property type="match status" value="1"/>
</dbReference>
<comment type="function">
    <text evidence="3">Transporter involved in a passive nitrate efflux. Not competent for chloride transport.</text>
</comment>
<comment type="biophysicochemical properties">
    <phDependence>
        <text evidence="3">Optimum pH is 6.5.</text>
    </phDependence>
</comment>
<comment type="subcellular location">
    <subcellularLocation>
        <location evidence="3">Cell membrane</location>
        <topology evidence="3">Multi-pass membrane protein</topology>
    </subcellularLocation>
</comment>
<comment type="alternative products">
    <event type="alternative splicing"/>
    <isoform>
        <id>Q9M1E2-1</id>
        <name>1</name>
        <sequence type="displayed"/>
    </isoform>
    <isoform>
        <id>Q9M1E2-2</id>
        <name>2</name>
        <sequence type="described" ref="VSP_039951"/>
    </isoform>
</comment>
<comment type="tissue specificity">
    <text evidence="2 3">Expressed in shoots and in the cortex of mature roots. Not expressed in root tip meristematic cells.</text>
</comment>
<comment type="induction">
    <text evidence="3">Not regulated by light or plant N status. Up-regulated at the protein level but not at the transcript level by medium acidification.</text>
</comment>
<comment type="disruption phenotype">
    <text evidence="3">No visible phenotype.</text>
</comment>
<comment type="similarity">
    <text evidence="5">Belongs to the major facilitator superfamily. Proton-dependent oligopeptide transporter (POT/PTR) (TC 2.A.17) family.</text>
</comment>
<comment type="sequence caution" evidence="5">
    <conflict type="frameshift">
        <sequence resource="EMBL-CDS" id="BAH57283"/>
    </conflict>
</comment>
<name>PTR37_ARATH</name>
<reference key="1">
    <citation type="journal article" date="2000" name="Nature">
        <title>Sequence and analysis of chromosome 3 of the plant Arabidopsis thaliana.</title>
        <authorList>
            <person name="Salanoubat M."/>
            <person name="Lemcke K."/>
            <person name="Rieger M."/>
            <person name="Ansorge W."/>
            <person name="Unseld M."/>
            <person name="Fartmann B."/>
            <person name="Valle G."/>
            <person name="Bloecker H."/>
            <person name="Perez-Alonso M."/>
            <person name="Obermaier B."/>
            <person name="Delseny M."/>
            <person name="Boutry M."/>
            <person name="Grivell L.A."/>
            <person name="Mache R."/>
            <person name="Puigdomenech P."/>
            <person name="De Simone V."/>
            <person name="Choisne N."/>
            <person name="Artiguenave F."/>
            <person name="Robert C."/>
            <person name="Brottier P."/>
            <person name="Wincker P."/>
            <person name="Cattolico L."/>
            <person name="Weissenbach J."/>
            <person name="Saurin W."/>
            <person name="Quetier F."/>
            <person name="Schaefer M."/>
            <person name="Mueller-Auer S."/>
            <person name="Gabel C."/>
            <person name="Fuchs M."/>
            <person name="Benes V."/>
            <person name="Wurmbach E."/>
            <person name="Drzonek H."/>
            <person name="Erfle H."/>
            <person name="Jordan N."/>
            <person name="Bangert S."/>
            <person name="Wiedelmann R."/>
            <person name="Kranz H."/>
            <person name="Voss H."/>
            <person name="Holland R."/>
            <person name="Brandt P."/>
            <person name="Nyakatura G."/>
            <person name="Vezzi A."/>
            <person name="D'Angelo M."/>
            <person name="Pallavicini A."/>
            <person name="Toppo S."/>
            <person name="Simionati B."/>
            <person name="Conrad A."/>
            <person name="Hornischer K."/>
            <person name="Kauer G."/>
            <person name="Loehnert T.-H."/>
            <person name="Nordsiek G."/>
            <person name="Reichelt J."/>
            <person name="Scharfe M."/>
            <person name="Schoen O."/>
            <person name="Bargues M."/>
            <person name="Terol J."/>
            <person name="Climent J."/>
            <person name="Navarro P."/>
            <person name="Collado C."/>
            <person name="Perez-Perez A."/>
            <person name="Ottenwaelder B."/>
            <person name="Duchemin D."/>
            <person name="Cooke R."/>
            <person name="Laudie M."/>
            <person name="Berger-Llauro C."/>
            <person name="Purnelle B."/>
            <person name="Masuy D."/>
            <person name="de Haan M."/>
            <person name="Maarse A.C."/>
            <person name="Alcaraz J.-P."/>
            <person name="Cottet A."/>
            <person name="Casacuberta E."/>
            <person name="Monfort A."/>
            <person name="Argiriou A."/>
            <person name="Flores M."/>
            <person name="Liguori R."/>
            <person name="Vitale D."/>
            <person name="Mannhaupt G."/>
            <person name="Haase D."/>
            <person name="Schoof H."/>
            <person name="Rudd S."/>
            <person name="Zaccaria P."/>
            <person name="Mewes H.-W."/>
            <person name="Mayer K.F.X."/>
            <person name="Kaul S."/>
            <person name="Town C.D."/>
            <person name="Koo H.L."/>
            <person name="Tallon L.J."/>
            <person name="Jenkins J."/>
            <person name="Rooney T."/>
            <person name="Rizzo M."/>
            <person name="Walts A."/>
            <person name="Utterback T."/>
            <person name="Fujii C.Y."/>
            <person name="Shea T.P."/>
            <person name="Creasy T.H."/>
            <person name="Haas B."/>
            <person name="Maiti R."/>
            <person name="Wu D."/>
            <person name="Peterson J."/>
            <person name="Van Aken S."/>
            <person name="Pai G."/>
            <person name="Militscher J."/>
            <person name="Sellers P."/>
            <person name="Gill J.E."/>
            <person name="Feldblyum T.V."/>
            <person name="Preuss D."/>
            <person name="Lin X."/>
            <person name="Nierman W.C."/>
            <person name="Salzberg S.L."/>
            <person name="White O."/>
            <person name="Venter J.C."/>
            <person name="Fraser C.M."/>
            <person name="Kaneko T."/>
            <person name="Nakamura Y."/>
            <person name="Sato S."/>
            <person name="Kato T."/>
            <person name="Asamizu E."/>
            <person name="Sasamoto S."/>
            <person name="Kimura T."/>
            <person name="Idesawa K."/>
            <person name="Kawashima K."/>
            <person name="Kishida Y."/>
            <person name="Kiyokawa C."/>
            <person name="Kohara M."/>
            <person name="Matsumoto M."/>
            <person name="Matsuno A."/>
            <person name="Muraki A."/>
            <person name="Nakayama S."/>
            <person name="Nakazaki N."/>
            <person name="Shinpo S."/>
            <person name="Takeuchi C."/>
            <person name="Wada T."/>
            <person name="Watanabe A."/>
            <person name="Yamada M."/>
            <person name="Yasuda M."/>
            <person name="Tabata S."/>
        </authorList>
    </citation>
    <scope>NUCLEOTIDE SEQUENCE [LARGE SCALE GENOMIC DNA]</scope>
    <source>
        <strain>cv. Columbia</strain>
    </source>
</reference>
<reference key="2">
    <citation type="journal article" date="2017" name="Plant J.">
        <title>Araport11: a complete reannotation of the Arabidopsis thaliana reference genome.</title>
        <authorList>
            <person name="Cheng C.Y."/>
            <person name="Krishnakumar V."/>
            <person name="Chan A.P."/>
            <person name="Thibaud-Nissen F."/>
            <person name="Schobel S."/>
            <person name="Town C.D."/>
        </authorList>
    </citation>
    <scope>GENOME REANNOTATION</scope>
    <source>
        <strain>cv. Columbia</strain>
    </source>
</reference>
<reference key="3">
    <citation type="journal article" date="2009" name="DNA Res.">
        <title>Analysis of multiple occurrences of alternative splicing events in Arabidopsis thaliana using novel sequenced full-length cDNAs.</title>
        <authorList>
            <person name="Iida K."/>
            <person name="Fukami-Kobayashi K."/>
            <person name="Toyoda A."/>
            <person name="Sakaki Y."/>
            <person name="Kobayashi M."/>
            <person name="Seki M."/>
            <person name="Shinozaki K."/>
        </authorList>
    </citation>
    <scope>NUCLEOTIDE SEQUENCE [LARGE SCALE MRNA] (ISOFORM 2)</scope>
    <source>
        <strain>cv. Columbia</strain>
    </source>
</reference>
<reference key="4">
    <citation type="journal article" date="2007" name="FEBS Lett.">
        <title>Nitrate transporters and peptide transporters.</title>
        <authorList>
            <person name="Tsay Y.F."/>
            <person name="Chiu C.C."/>
            <person name="Tsai C.B."/>
            <person name="Ho C.H."/>
            <person name="Hsu P.K."/>
        </authorList>
    </citation>
    <scope>TISSUE SPECIFICITY</scope>
    <scope>GENE FAMILY</scope>
</reference>
<reference key="5">
    <citation type="journal article" date="2007" name="Plant Cell">
        <title>Nitrate efflux at the root plasma membrane: identification of an Arabidopsis excretion transporter.</title>
        <authorList>
            <person name="Segonzac C."/>
            <person name="Boyer J.C."/>
            <person name="Ipotesi E."/>
            <person name="Szponarski W."/>
            <person name="Tillard P."/>
            <person name="Touraine B."/>
            <person name="Sommerer N."/>
            <person name="Rossignol M."/>
            <person name="Gibrat R."/>
        </authorList>
    </citation>
    <scope>FUNCTION</scope>
    <scope>IDENTIFICATION BY MASS SPECTROMETRY</scope>
    <scope>SUBCELLULAR LOCATION</scope>
    <scope>TISSUE SPECIFICITY</scope>
    <scope>INDUCTION BY LIGHT</scope>
    <scope>MEDIUM ACIDIFICATION AND NITRATE</scope>
    <scope>BIOPHYSICOCHEMICAL PROPERTIES</scope>
    <scope>DISRUPTION PHENOTYPE</scope>
</reference>
<reference key="6">
    <citation type="journal article" date="2010" name="Plant Cell">
        <title>The Arabidopsis nitrate transporter NRT1.8 functions in nitrate removal from the xylem sap and mediates cadmium tolerance.</title>
        <authorList>
            <person name="Li J.Y."/>
            <person name="Fu Y.L."/>
            <person name="Pike S.M."/>
            <person name="Bao J."/>
            <person name="Tian W."/>
            <person name="Zhang Y."/>
            <person name="Chen C.Z."/>
            <person name="Zhang Y."/>
            <person name="Li H.M."/>
            <person name="Huang J."/>
            <person name="Li L.G."/>
            <person name="Schroeder J.I."/>
            <person name="Gassmann W."/>
            <person name="Gong J.M."/>
        </authorList>
    </citation>
    <scope>GENE FAMILY</scope>
</reference>
<reference key="7">
    <citation type="journal article" date="2014" name="Trends Plant Sci.">
        <title>A unified nomenclature of NITRATE TRANSPORTER 1/PEPTIDE TRANSPORTER family members in plants.</title>
        <authorList>
            <person name="Leran S."/>
            <person name="Varala K."/>
            <person name="Boyer J.C."/>
            <person name="Chiurazzi M."/>
            <person name="Crawford N."/>
            <person name="Daniel-Vedele F."/>
            <person name="David L."/>
            <person name="Dickstein R."/>
            <person name="Fernandez E."/>
            <person name="Forde B."/>
            <person name="Gassmann W."/>
            <person name="Geiger D."/>
            <person name="Gojon A."/>
            <person name="Gong J.M."/>
            <person name="Halkier B.A."/>
            <person name="Harris J.M."/>
            <person name="Hedrich R."/>
            <person name="Limami A.M."/>
            <person name="Rentsch D."/>
            <person name="Seo M."/>
            <person name="Tsay Y.F."/>
            <person name="Zhang M."/>
            <person name="Coruzzi G."/>
            <person name="Lacombe B."/>
        </authorList>
    </citation>
    <scope>GENE FAMILY</scope>
    <scope>NOMENCLATURE</scope>
</reference>
<keyword id="KW-0025">Alternative splicing</keyword>
<keyword id="KW-1003">Cell membrane</keyword>
<keyword id="KW-0472">Membrane</keyword>
<keyword id="KW-0534">Nitrate assimilation</keyword>
<keyword id="KW-1185">Reference proteome</keyword>
<keyword id="KW-0812">Transmembrane</keyword>
<keyword id="KW-1133">Transmembrane helix</keyword>
<keyword id="KW-0813">Transport</keyword>
<sequence length="558" mass="61099">MASSVTGDAETAISADSSTKRRGGGWITFPFMIATLLGLTIAAWGWLLNLIVYLIEEFNVKSIAAAQIANIVSGCICMVPAVAAIASDSFFGTIPVISVSAFISLMGVALLTLTASLDTLRPRPCETASILCQSPSKTQLGVLYTAITLASIGTGGTRFTLATAGANQYEKTKDQGSFFNWFFFTTYLAGAISATAIVYTEDNISWTLGFGLSVAANFFSFLVFVSGKRFYKHDKPLGSPFTSLLCVIFAALRKRKAVVSTNEKDYHNESITMPTKSFRFFNRAALKQEDEVKPDGTIRNPWRLCSVQQVEDFKAVIRIIPLALATIFLSTPIAMQLSLTVLQGLVMDRRLGPSFKIPAGSLQVITLLSTCLFIIVNDRVLYPFYQKLTGKHLTPLQRVGIGHAFNILSMAVTAIVEAKRLKIVQKGHFLGSSSVADMSVLWLFPPLVIVGIGEAFHFPGNVALCYQEFPESMRSTATSITSVVIGICFYTSTALIDLIQRTTAWLPDDINHGRVDNVYWILVIGGVLNLGYFLVCSWLYRYRNLKDDDHKQAANVSH</sequence>
<evidence type="ECO:0000255" key="1"/>
<evidence type="ECO:0000269" key="2">
    <source>
    </source>
</evidence>
<evidence type="ECO:0000269" key="3">
    <source>
    </source>
</evidence>
<evidence type="ECO:0000303" key="4">
    <source>
    </source>
</evidence>
<evidence type="ECO:0000305" key="5"/>
<proteinExistence type="evidence at protein level"/>
<protein>
    <recommendedName>
        <fullName>Protein NRT1/ PTR FAMILY 2.7</fullName>
        <shortName>AtNPF2.7</shortName>
    </recommendedName>
    <alternativeName>
        <fullName>Nitrate excretion transporter 1</fullName>
    </alternativeName>
</protein>
<gene>
    <name type="primary">NPF2.7</name>
    <name type="synonym">NAXT1</name>
    <name type="ordered locus">At3g45650</name>
    <name type="ORF">F9K21.230</name>
</gene>
<feature type="chain" id="PRO_0000399971" description="Protein NRT1/ PTR FAMILY 2.7">
    <location>
        <begin position="1"/>
        <end position="558"/>
    </location>
</feature>
<feature type="transmembrane region" description="Helical" evidence="1">
    <location>
        <begin position="31"/>
        <end position="51"/>
    </location>
</feature>
<feature type="transmembrane region" description="Helical" evidence="1">
    <location>
        <begin position="63"/>
        <end position="83"/>
    </location>
</feature>
<feature type="transmembrane region" description="Helical" evidence="1">
    <location>
        <begin position="90"/>
        <end position="110"/>
    </location>
</feature>
<feature type="transmembrane region" description="Helical" evidence="1">
    <location>
        <begin position="140"/>
        <end position="162"/>
    </location>
</feature>
<feature type="transmembrane region" description="Helical" evidence="1">
    <location>
        <begin position="178"/>
        <end position="198"/>
    </location>
</feature>
<feature type="transmembrane region" description="Helical" evidence="1">
    <location>
        <begin position="204"/>
        <end position="224"/>
    </location>
</feature>
<feature type="transmembrane region" description="Helical" evidence="1">
    <location>
        <begin position="319"/>
        <end position="339"/>
    </location>
</feature>
<feature type="transmembrane region" description="Helical" evidence="1">
    <location>
        <begin position="357"/>
        <end position="377"/>
    </location>
</feature>
<feature type="transmembrane region" description="Helical" evidence="1">
    <location>
        <begin position="399"/>
        <end position="419"/>
    </location>
</feature>
<feature type="transmembrane region" description="Helical" evidence="1">
    <location>
        <begin position="440"/>
        <end position="460"/>
    </location>
</feature>
<feature type="transmembrane region" description="Helical" evidence="1">
    <location>
        <begin position="479"/>
        <end position="499"/>
    </location>
</feature>
<feature type="transmembrane region" description="Helical" evidence="1">
    <location>
        <begin position="518"/>
        <end position="538"/>
    </location>
</feature>
<feature type="splice variant" id="VSP_039951" description="In isoform 2." evidence="4">
    <location>
        <begin position="1"/>
        <end position="272"/>
    </location>
</feature>
<accession>Q9M1E2</accession>
<accession>C0Z3K4</accession>